<comment type="subunit">
    <text evidence="1">Interacts with the 40S ribosomal subunit.</text>
</comment>
<comment type="subcellular location">
    <subcellularLocation>
        <location evidence="1">Cytoplasm</location>
    </subcellularLocation>
</comment>
<comment type="domain">
    <text>The SUI1 domain may be involved in RNA binding.</text>
</comment>
<comment type="similarity">
    <text evidence="3">Belongs to the DENR family.</text>
</comment>
<accession>Q2TVZ2</accession>
<sequence length="194" mass="21287">MAEVVQSGPVEAQARHVVYCGVCTLPPEYCEFGGTAKKCEEWLKEKQPELYQRLHSEEAISANLSTLSISAQERAAKDAAKKEAKAALAEARDAERKAASKVQIKRVERNKRKHVTVIAGLEVYGLENKKVAKELGKKFATGSSVTRSAAGNEEITVQGDVSDDVQDWLLEVYGKEIPEANIEIIEDKKKKGSS</sequence>
<reference key="1">
    <citation type="journal article" date="2005" name="Nature">
        <title>Genome sequencing and analysis of Aspergillus oryzae.</title>
        <authorList>
            <person name="Machida M."/>
            <person name="Asai K."/>
            <person name="Sano M."/>
            <person name="Tanaka T."/>
            <person name="Kumagai T."/>
            <person name="Terai G."/>
            <person name="Kusumoto K."/>
            <person name="Arima T."/>
            <person name="Akita O."/>
            <person name="Kashiwagi Y."/>
            <person name="Abe K."/>
            <person name="Gomi K."/>
            <person name="Horiuchi H."/>
            <person name="Kitamoto K."/>
            <person name="Kobayashi T."/>
            <person name="Takeuchi M."/>
            <person name="Denning D.W."/>
            <person name="Galagan J.E."/>
            <person name="Nierman W.C."/>
            <person name="Yu J."/>
            <person name="Archer D.B."/>
            <person name="Bennett J.W."/>
            <person name="Bhatnagar D."/>
            <person name="Cleveland T.E."/>
            <person name="Fedorova N.D."/>
            <person name="Gotoh O."/>
            <person name="Horikawa H."/>
            <person name="Hosoyama A."/>
            <person name="Ichinomiya M."/>
            <person name="Igarashi R."/>
            <person name="Iwashita K."/>
            <person name="Juvvadi P.R."/>
            <person name="Kato M."/>
            <person name="Kato Y."/>
            <person name="Kin T."/>
            <person name="Kokubun A."/>
            <person name="Maeda H."/>
            <person name="Maeyama N."/>
            <person name="Maruyama J."/>
            <person name="Nagasaki H."/>
            <person name="Nakajima T."/>
            <person name="Oda K."/>
            <person name="Okada K."/>
            <person name="Paulsen I."/>
            <person name="Sakamoto K."/>
            <person name="Sawano T."/>
            <person name="Takahashi M."/>
            <person name="Takase K."/>
            <person name="Terabayashi Y."/>
            <person name="Wortman J.R."/>
            <person name="Yamada O."/>
            <person name="Yamagata Y."/>
            <person name="Anazawa H."/>
            <person name="Hata Y."/>
            <person name="Koide Y."/>
            <person name="Komori T."/>
            <person name="Koyama Y."/>
            <person name="Minetoki T."/>
            <person name="Suharnan S."/>
            <person name="Tanaka A."/>
            <person name="Isono K."/>
            <person name="Kuhara S."/>
            <person name="Ogasawara N."/>
            <person name="Kikuchi H."/>
        </authorList>
    </citation>
    <scope>NUCLEOTIDE SEQUENCE [LARGE SCALE GENOMIC DNA]</scope>
    <source>
        <strain>ATCC 42149 / RIB 40</strain>
    </source>
</reference>
<protein>
    <recommendedName>
        <fullName>Translation machinery-associated protein 22</fullName>
    </recommendedName>
</protein>
<proteinExistence type="inferred from homology"/>
<feature type="chain" id="PRO_0000320436" description="Translation machinery-associated protein 22">
    <location>
        <begin position="1"/>
        <end position="194"/>
    </location>
</feature>
<feature type="domain" description="SUI1" evidence="2">
    <location>
        <begin position="102"/>
        <end position="173"/>
    </location>
</feature>
<evidence type="ECO:0000250" key="1"/>
<evidence type="ECO:0000255" key="2">
    <source>
        <dbReference type="PROSITE-ProRule" id="PRU00200"/>
    </source>
</evidence>
<evidence type="ECO:0000305" key="3"/>
<organism>
    <name type="scientific">Aspergillus oryzae (strain ATCC 42149 / RIB 40)</name>
    <name type="common">Yellow koji mold</name>
    <dbReference type="NCBI Taxonomy" id="510516"/>
    <lineage>
        <taxon>Eukaryota</taxon>
        <taxon>Fungi</taxon>
        <taxon>Dikarya</taxon>
        <taxon>Ascomycota</taxon>
        <taxon>Pezizomycotina</taxon>
        <taxon>Eurotiomycetes</taxon>
        <taxon>Eurotiomycetidae</taxon>
        <taxon>Eurotiales</taxon>
        <taxon>Aspergillaceae</taxon>
        <taxon>Aspergillus</taxon>
        <taxon>Aspergillus subgen. Circumdati</taxon>
    </lineage>
</organism>
<name>DENR_ASPOR</name>
<gene>
    <name type="primary">tma22</name>
    <name type="ORF">AO090010000764</name>
</gene>
<dbReference type="EMBL" id="BA000056">
    <property type="protein sequence ID" value="BAE66581.1"/>
    <property type="molecule type" value="Genomic_DNA"/>
</dbReference>
<dbReference type="RefSeq" id="XP_001827714.1">
    <property type="nucleotide sequence ID" value="XM_001827662.2"/>
</dbReference>
<dbReference type="SMR" id="Q2TVZ2"/>
<dbReference type="STRING" id="510516.Q2TVZ2"/>
<dbReference type="EnsemblFungi" id="BAE66581">
    <property type="protein sequence ID" value="BAE66581"/>
    <property type="gene ID" value="AO090010000764"/>
</dbReference>
<dbReference type="GeneID" id="5999848"/>
<dbReference type="KEGG" id="aor:AO090010000764"/>
<dbReference type="VEuPathDB" id="FungiDB:AO090010000764"/>
<dbReference type="HOGENOM" id="CLU_073511_0_1_1"/>
<dbReference type="OMA" id="EVFEIDM"/>
<dbReference type="OrthoDB" id="124373at5052"/>
<dbReference type="Proteomes" id="UP000006564">
    <property type="component" value="Chromosome 8"/>
</dbReference>
<dbReference type="GO" id="GO:0005737">
    <property type="term" value="C:cytoplasm"/>
    <property type="evidence" value="ECO:0007669"/>
    <property type="project" value="UniProtKB-SubCell"/>
</dbReference>
<dbReference type="GO" id="GO:1990904">
    <property type="term" value="C:ribonucleoprotein complex"/>
    <property type="evidence" value="ECO:0007669"/>
    <property type="project" value="UniProtKB-KW"/>
</dbReference>
<dbReference type="GO" id="GO:0005840">
    <property type="term" value="C:ribosome"/>
    <property type="evidence" value="ECO:0007669"/>
    <property type="project" value="UniProtKB-KW"/>
</dbReference>
<dbReference type="GO" id="GO:0003729">
    <property type="term" value="F:mRNA binding"/>
    <property type="evidence" value="ECO:0007669"/>
    <property type="project" value="TreeGrafter"/>
</dbReference>
<dbReference type="GO" id="GO:0003743">
    <property type="term" value="F:translation initiation factor activity"/>
    <property type="evidence" value="ECO:0007669"/>
    <property type="project" value="InterPro"/>
</dbReference>
<dbReference type="GO" id="GO:0001731">
    <property type="term" value="P:formation of translation preinitiation complex"/>
    <property type="evidence" value="ECO:0007669"/>
    <property type="project" value="TreeGrafter"/>
</dbReference>
<dbReference type="GO" id="GO:0000184">
    <property type="term" value="P:nuclear-transcribed mRNA catabolic process, nonsense-mediated decay"/>
    <property type="evidence" value="ECO:0007669"/>
    <property type="project" value="EnsemblFungi"/>
</dbReference>
<dbReference type="GO" id="GO:0032790">
    <property type="term" value="P:ribosome disassembly"/>
    <property type="evidence" value="ECO:0007669"/>
    <property type="project" value="EnsemblFungi"/>
</dbReference>
<dbReference type="GO" id="GO:0002188">
    <property type="term" value="P:translation reinitiation"/>
    <property type="evidence" value="ECO:0007669"/>
    <property type="project" value="TreeGrafter"/>
</dbReference>
<dbReference type="CDD" id="cd11607">
    <property type="entry name" value="DENR_C"/>
    <property type="match status" value="1"/>
</dbReference>
<dbReference type="FunFam" id="3.30.780.10:FF:000014">
    <property type="entry name" value="Translation machinery-associated protein 22"/>
    <property type="match status" value="1"/>
</dbReference>
<dbReference type="Gene3D" id="3.30.780.10">
    <property type="entry name" value="SUI1-like domain"/>
    <property type="match status" value="1"/>
</dbReference>
<dbReference type="InterPro" id="IPR050318">
    <property type="entry name" value="DENR/SUI1_TIF"/>
</dbReference>
<dbReference type="InterPro" id="IPR046447">
    <property type="entry name" value="DENR_C"/>
</dbReference>
<dbReference type="InterPro" id="IPR005873">
    <property type="entry name" value="DENR_eukaryotes"/>
</dbReference>
<dbReference type="InterPro" id="IPR048517">
    <property type="entry name" value="DENR_N"/>
</dbReference>
<dbReference type="InterPro" id="IPR001950">
    <property type="entry name" value="SUI1"/>
</dbReference>
<dbReference type="InterPro" id="IPR036877">
    <property type="entry name" value="SUI1_dom_sf"/>
</dbReference>
<dbReference type="NCBIfam" id="TIGR01159">
    <property type="entry name" value="DRP1"/>
    <property type="match status" value="1"/>
</dbReference>
<dbReference type="PANTHER" id="PTHR12789:SF0">
    <property type="entry name" value="DENSITY-REGULATED PROTEIN"/>
    <property type="match status" value="1"/>
</dbReference>
<dbReference type="PANTHER" id="PTHR12789">
    <property type="entry name" value="DENSITY-REGULATED PROTEIN HOMOLOG"/>
    <property type="match status" value="1"/>
</dbReference>
<dbReference type="Pfam" id="PF21023">
    <property type="entry name" value="DENR_N"/>
    <property type="match status" value="1"/>
</dbReference>
<dbReference type="Pfam" id="PF01253">
    <property type="entry name" value="SUI1"/>
    <property type="match status" value="1"/>
</dbReference>
<dbReference type="SUPFAM" id="SSF55159">
    <property type="entry name" value="eIF1-like"/>
    <property type="match status" value="1"/>
</dbReference>
<dbReference type="PROSITE" id="PS50296">
    <property type="entry name" value="SUI1"/>
    <property type="match status" value="1"/>
</dbReference>
<keyword id="KW-0963">Cytoplasm</keyword>
<keyword id="KW-1185">Reference proteome</keyword>
<keyword id="KW-0687">Ribonucleoprotein</keyword>
<keyword id="KW-0689">Ribosomal protein</keyword>